<dbReference type="EMBL" id="CP001124">
    <property type="protein sequence ID" value="ACH37956.1"/>
    <property type="molecule type" value="Genomic_DNA"/>
</dbReference>
<dbReference type="RefSeq" id="WP_012529368.1">
    <property type="nucleotide sequence ID" value="NC_011146.1"/>
</dbReference>
<dbReference type="SMR" id="B5EFQ2"/>
<dbReference type="STRING" id="404380.Gbem_0935"/>
<dbReference type="KEGG" id="gbm:Gbem_0935"/>
<dbReference type="eggNOG" id="COG0089">
    <property type="taxonomic scope" value="Bacteria"/>
</dbReference>
<dbReference type="HOGENOM" id="CLU_037562_3_1_7"/>
<dbReference type="OrthoDB" id="9793353at2"/>
<dbReference type="Proteomes" id="UP000008825">
    <property type="component" value="Chromosome"/>
</dbReference>
<dbReference type="GO" id="GO:1990904">
    <property type="term" value="C:ribonucleoprotein complex"/>
    <property type="evidence" value="ECO:0007669"/>
    <property type="project" value="UniProtKB-KW"/>
</dbReference>
<dbReference type="GO" id="GO:0005840">
    <property type="term" value="C:ribosome"/>
    <property type="evidence" value="ECO:0007669"/>
    <property type="project" value="UniProtKB-KW"/>
</dbReference>
<dbReference type="GO" id="GO:0019843">
    <property type="term" value="F:rRNA binding"/>
    <property type="evidence" value="ECO:0007669"/>
    <property type="project" value="UniProtKB-UniRule"/>
</dbReference>
<dbReference type="GO" id="GO:0003735">
    <property type="term" value="F:structural constituent of ribosome"/>
    <property type="evidence" value="ECO:0007669"/>
    <property type="project" value="InterPro"/>
</dbReference>
<dbReference type="GO" id="GO:0006412">
    <property type="term" value="P:translation"/>
    <property type="evidence" value="ECO:0007669"/>
    <property type="project" value="UniProtKB-UniRule"/>
</dbReference>
<dbReference type="FunFam" id="3.30.70.330:FF:000001">
    <property type="entry name" value="50S ribosomal protein L23"/>
    <property type="match status" value="1"/>
</dbReference>
<dbReference type="Gene3D" id="3.30.70.330">
    <property type="match status" value="1"/>
</dbReference>
<dbReference type="HAMAP" id="MF_01369_B">
    <property type="entry name" value="Ribosomal_uL23_B"/>
    <property type="match status" value="1"/>
</dbReference>
<dbReference type="InterPro" id="IPR012677">
    <property type="entry name" value="Nucleotide-bd_a/b_plait_sf"/>
</dbReference>
<dbReference type="InterPro" id="IPR013025">
    <property type="entry name" value="Ribosomal_uL23-like"/>
</dbReference>
<dbReference type="InterPro" id="IPR012678">
    <property type="entry name" value="Ribosomal_uL23/eL15/eS24_sf"/>
</dbReference>
<dbReference type="InterPro" id="IPR001014">
    <property type="entry name" value="Ribosomal_uL23_CS"/>
</dbReference>
<dbReference type="NCBIfam" id="NF004359">
    <property type="entry name" value="PRK05738.1-3"/>
    <property type="match status" value="1"/>
</dbReference>
<dbReference type="NCBIfam" id="NF004363">
    <property type="entry name" value="PRK05738.2-4"/>
    <property type="match status" value="1"/>
</dbReference>
<dbReference type="NCBIfam" id="NF004366">
    <property type="entry name" value="PRK05738.3-2"/>
    <property type="match status" value="1"/>
</dbReference>
<dbReference type="PANTHER" id="PTHR11620">
    <property type="entry name" value="60S RIBOSOMAL PROTEIN L23A"/>
    <property type="match status" value="1"/>
</dbReference>
<dbReference type="Pfam" id="PF00276">
    <property type="entry name" value="Ribosomal_L23"/>
    <property type="match status" value="1"/>
</dbReference>
<dbReference type="SUPFAM" id="SSF54189">
    <property type="entry name" value="Ribosomal proteins S24e, L23 and L15e"/>
    <property type="match status" value="1"/>
</dbReference>
<dbReference type="PROSITE" id="PS00050">
    <property type="entry name" value="RIBOSOMAL_L23"/>
    <property type="match status" value="1"/>
</dbReference>
<sequence>MNIYDVIKKPLITEKTTVEKDDKNVIAFVVNGAANKIEIKAAVEKLFNAQVSAVNTVNVAGKTKRTAKGIGKRSNWKKAYVTLKEGSNVDFFEA</sequence>
<name>RL23_CITBB</name>
<gene>
    <name evidence="1" type="primary">rplW</name>
    <name type="ordered locus">Gbem_0935</name>
</gene>
<proteinExistence type="inferred from homology"/>
<reference key="1">
    <citation type="submission" date="2008-07" db="EMBL/GenBank/DDBJ databases">
        <title>Complete sequence of Geobacter bemidjiensis BEM.</title>
        <authorList>
            <consortium name="US DOE Joint Genome Institute"/>
            <person name="Lucas S."/>
            <person name="Copeland A."/>
            <person name="Lapidus A."/>
            <person name="Glavina del Rio T."/>
            <person name="Dalin E."/>
            <person name="Tice H."/>
            <person name="Bruce D."/>
            <person name="Goodwin L."/>
            <person name="Pitluck S."/>
            <person name="Kiss H."/>
            <person name="Brettin T."/>
            <person name="Detter J.C."/>
            <person name="Han C."/>
            <person name="Kuske C.R."/>
            <person name="Schmutz J."/>
            <person name="Larimer F."/>
            <person name="Land M."/>
            <person name="Hauser L."/>
            <person name="Kyrpides N."/>
            <person name="Lykidis A."/>
            <person name="Lovley D."/>
            <person name="Richardson P."/>
        </authorList>
    </citation>
    <scope>NUCLEOTIDE SEQUENCE [LARGE SCALE GENOMIC DNA]</scope>
    <source>
        <strain>ATCC BAA-1014 / DSM 16622 / JCM 12645 / Bem</strain>
    </source>
</reference>
<evidence type="ECO:0000255" key="1">
    <source>
        <dbReference type="HAMAP-Rule" id="MF_01369"/>
    </source>
</evidence>
<evidence type="ECO:0000305" key="2"/>
<accession>B5EFQ2</accession>
<comment type="function">
    <text evidence="1">One of the early assembly proteins it binds 23S rRNA. One of the proteins that surrounds the polypeptide exit tunnel on the outside of the ribosome. Forms the main docking site for trigger factor binding to the ribosome.</text>
</comment>
<comment type="subunit">
    <text evidence="1">Part of the 50S ribosomal subunit. Contacts protein L29, and trigger factor when it is bound to the ribosome.</text>
</comment>
<comment type="similarity">
    <text evidence="1">Belongs to the universal ribosomal protein uL23 family.</text>
</comment>
<feature type="chain" id="PRO_1000144569" description="Large ribosomal subunit protein uL23">
    <location>
        <begin position="1"/>
        <end position="94"/>
    </location>
</feature>
<keyword id="KW-1185">Reference proteome</keyword>
<keyword id="KW-0687">Ribonucleoprotein</keyword>
<keyword id="KW-0689">Ribosomal protein</keyword>
<keyword id="KW-0694">RNA-binding</keyword>
<keyword id="KW-0699">rRNA-binding</keyword>
<protein>
    <recommendedName>
        <fullName evidence="1">Large ribosomal subunit protein uL23</fullName>
    </recommendedName>
    <alternativeName>
        <fullName evidence="2">50S ribosomal protein L23</fullName>
    </alternativeName>
</protein>
<organism>
    <name type="scientific">Citrifermentans bemidjiense (strain ATCC BAA-1014 / DSM 16622 / JCM 12645 / Bem)</name>
    <name type="common">Geobacter bemidjiensis</name>
    <dbReference type="NCBI Taxonomy" id="404380"/>
    <lineage>
        <taxon>Bacteria</taxon>
        <taxon>Pseudomonadati</taxon>
        <taxon>Thermodesulfobacteriota</taxon>
        <taxon>Desulfuromonadia</taxon>
        <taxon>Geobacterales</taxon>
        <taxon>Geobacteraceae</taxon>
        <taxon>Citrifermentans</taxon>
    </lineage>
</organism>